<dbReference type="EC" id="5.6.2.1" evidence="1"/>
<dbReference type="EMBL" id="CP000046">
    <property type="protein sequence ID" value="AAW38099.1"/>
    <property type="molecule type" value="Genomic_DNA"/>
</dbReference>
<dbReference type="SMR" id="Q5HGI2"/>
<dbReference type="KEGG" id="sac:SACOL1267"/>
<dbReference type="HOGENOM" id="CLU_002929_4_3_9"/>
<dbReference type="Proteomes" id="UP000000530">
    <property type="component" value="Chromosome"/>
</dbReference>
<dbReference type="GO" id="GO:0005694">
    <property type="term" value="C:chromosome"/>
    <property type="evidence" value="ECO:0007669"/>
    <property type="project" value="InterPro"/>
</dbReference>
<dbReference type="GO" id="GO:0003677">
    <property type="term" value="F:DNA binding"/>
    <property type="evidence" value="ECO:0007669"/>
    <property type="project" value="UniProtKB-KW"/>
</dbReference>
<dbReference type="GO" id="GO:0003917">
    <property type="term" value="F:DNA topoisomerase type I (single strand cut, ATP-independent) activity"/>
    <property type="evidence" value="ECO:0007669"/>
    <property type="project" value="UniProtKB-UniRule"/>
</dbReference>
<dbReference type="GO" id="GO:0008270">
    <property type="term" value="F:zinc ion binding"/>
    <property type="evidence" value="ECO:0007669"/>
    <property type="project" value="UniProtKB-KW"/>
</dbReference>
<dbReference type="GO" id="GO:0006265">
    <property type="term" value="P:DNA topological change"/>
    <property type="evidence" value="ECO:0007669"/>
    <property type="project" value="UniProtKB-UniRule"/>
</dbReference>
<dbReference type="CDD" id="cd00186">
    <property type="entry name" value="TOP1Ac"/>
    <property type="match status" value="1"/>
</dbReference>
<dbReference type="CDD" id="cd03363">
    <property type="entry name" value="TOPRIM_TopoIA_TopoI"/>
    <property type="match status" value="1"/>
</dbReference>
<dbReference type="Gene3D" id="3.40.50.140">
    <property type="match status" value="1"/>
</dbReference>
<dbReference type="Gene3D" id="3.30.65.10">
    <property type="entry name" value="Bacterial Topoisomerase I, domain 1"/>
    <property type="match status" value="2"/>
</dbReference>
<dbReference type="Gene3D" id="1.10.460.10">
    <property type="entry name" value="Topoisomerase I, domain 2"/>
    <property type="match status" value="1"/>
</dbReference>
<dbReference type="Gene3D" id="2.70.20.10">
    <property type="entry name" value="Topoisomerase I, domain 3"/>
    <property type="match status" value="1"/>
</dbReference>
<dbReference type="Gene3D" id="1.10.290.10">
    <property type="entry name" value="Topoisomerase I, domain 4"/>
    <property type="match status" value="1"/>
</dbReference>
<dbReference type="HAMAP" id="MF_00952">
    <property type="entry name" value="Topoisom_1_prok"/>
    <property type="match status" value="1"/>
</dbReference>
<dbReference type="InterPro" id="IPR000380">
    <property type="entry name" value="Topo_IA"/>
</dbReference>
<dbReference type="InterPro" id="IPR003601">
    <property type="entry name" value="Topo_IA_2"/>
</dbReference>
<dbReference type="InterPro" id="IPR023406">
    <property type="entry name" value="Topo_IA_AS"/>
</dbReference>
<dbReference type="InterPro" id="IPR013497">
    <property type="entry name" value="Topo_IA_cen"/>
</dbReference>
<dbReference type="InterPro" id="IPR013824">
    <property type="entry name" value="Topo_IA_cen_sub1"/>
</dbReference>
<dbReference type="InterPro" id="IPR013825">
    <property type="entry name" value="Topo_IA_cen_sub2"/>
</dbReference>
<dbReference type="InterPro" id="IPR013826">
    <property type="entry name" value="Topo_IA_cen_sub3"/>
</dbReference>
<dbReference type="InterPro" id="IPR023405">
    <property type="entry name" value="Topo_IA_core_domain"/>
</dbReference>
<dbReference type="InterPro" id="IPR003602">
    <property type="entry name" value="Topo_IA_DNA-bd_dom"/>
</dbReference>
<dbReference type="InterPro" id="IPR013498">
    <property type="entry name" value="Topo_IA_Znf"/>
</dbReference>
<dbReference type="InterPro" id="IPR005733">
    <property type="entry name" value="TopoI_bac-type"/>
</dbReference>
<dbReference type="InterPro" id="IPR028612">
    <property type="entry name" value="Topoisom_1_IA"/>
</dbReference>
<dbReference type="InterPro" id="IPR006171">
    <property type="entry name" value="TOPRIM_dom"/>
</dbReference>
<dbReference type="InterPro" id="IPR034149">
    <property type="entry name" value="TOPRIM_TopoI"/>
</dbReference>
<dbReference type="NCBIfam" id="TIGR01051">
    <property type="entry name" value="topA_bact"/>
    <property type="match status" value="1"/>
</dbReference>
<dbReference type="PANTHER" id="PTHR42785:SF1">
    <property type="entry name" value="DNA TOPOISOMERASE"/>
    <property type="match status" value="1"/>
</dbReference>
<dbReference type="PANTHER" id="PTHR42785">
    <property type="entry name" value="DNA TOPOISOMERASE, TYPE IA, CORE"/>
    <property type="match status" value="1"/>
</dbReference>
<dbReference type="Pfam" id="PF01131">
    <property type="entry name" value="Topoisom_bac"/>
    <property type="match status" value="1"/>
</dbReference>
<dbReference type="Pfam" id="PF01751">
    <property type="entry name" value="Toprim"/>
    <property type="match status" value="1"/>
</dbReference>
<dbReference type="Pfam" id="PF01396">
    <property type="entry name" value="Zn_ribbon_Top1"/>
    <property type="match status" value="3"/>
</dbReference>
<dbReference type="PRINTS" id="PR00417">
    <property type="entry name" value="PRTPISMRASEI"/>
</dbReference>
<dbReference type="SMART" id="SM00437">
    <property type="entry name" value="TOP1Ac"/>
    <property type="match status" value="1"/>
</dbReference>
<dbReference type="SMART" id="SM00436">
    <property type="entry name" value="TOP1Bc"/>
    <property type="match status" value="1"/>
</dbReference>
<dbReference type="SMART" id="SM00493">
    <property type="entry name" value="TOPRIM"/>
    <property type="match status" value="1"/>
</dbReference>
<dbReference type="SUPFAM" id="SSF56712">
    <property type="entry name" value="Prokaryotic type I DNA topoisomerase"/>
    <property type="match status" value="1"/>
</dbReference>
<dbReference type="PROSITE" id="PS00396">
    <property type="entry name" value="TOPO_IA_1"/>
    <property type="match status" value="1"/>
</dbReference>
<dbReference type="PROSITE" id="PS52039">
    <property type="entry name" value="TOPO_IA_2"/>
    <property type="match status" value="1"/>
</dbReference>
<dbReference type="PROSITE" id="PS50880">
    <property type="entry name" value="TOPRIM"/>
    <property type="match status" value="1"/>
</dbReference>
<protein>
    <recommendedName>
        <fullName evidence="1">DNA topoisomerase 1</fullName>
        <ecNumber evidence="1">5.6.2.1</ecNumber>
    </recommendedName>
    <alternativeName>
        <fullName evidence="1">DNA topoisomerase I</fullName>
    </alternativeName>
    <alternativeName>
        <fullName>Omega-protein</fullName>
    </alternativeName>
    <alternativeName>
        <fullName>Relaxing enzyme</fullName>
    </alternativeName>
    <alternativeName>
        <fullName>Swivelase</fullName>
    </alternativeName>
    <alternativeName>
        <fullName>Untwisting enzyme</fullName>
    </alternativeName>
</protein>
<proteinExistence type="inferred from homology"/>
<sequence>MADNLVIVESPAKAKTIEKYLGKKYKVIASMGHVRDLPRSQMGVDTEDNYEPKYITIRGKGPVVKELKKHAKKAKNVFLASDPDREGEAIAWHLSKILELEDSKENRVVFNEITKDAVKESFKNPREIEMNLVDAQQARRILDRLVGYNISPVLWKKVKKGLSAGRVQSVALRLVIDRENEIRNFKPEEYWTIEGEFRYKKSKFNAKFLHYKNKPFKLKTKKDVEKITAALDGDQFEITNVTKKEKTRNPANPFTTSTLQQEAARKLNFKARKTMMVAQQLYEGIDLKKQGTIGLITYMRTDSTRISDTAKVEAKQYITDKYGESYTSKRKASGKQGDQDAHEAIRPSSTMRTPDDMKSFLTKDQYRLYKLIWERFVASQMAPAILDTVSLDITQGDIKFRANGQTIKFKGFMTLYVETKDDSDSEKENKLPKLEQGDKVTATQIEPAQHYTQPPPRYTEARLVKTLEELKIGRPSTYAPTIDTIQKRNYVKLESKRFVPTELGEIVHEQVKEYFPEIIDVEFTVNMETLLDKIAEGDITWRKVIDGFFSSFKQDVERAEEEMEKIEIKDEPAGEDCEICGSPMVIKMGRYGKFMACSNFPDCRNTKAIVKSIGVKCPKCNDGDVVERKSKKNRVFYGCSKYPECDFISWDKPIGRDCPKCNQYLVENKKGKTTQVICSNCDYKEAAQK</sequence>
<feature type="chain" id="PRO_0000285936" description="DNA topoisomerase 1">
    <location>
        <begin position="1"/>
        <end position="689"/>
    </location>
</feature>
<feature type="domain" description="Toprim" evidence="1">
    <location>
        <begin position="3"/>
        <end position="113"/>
    </location>
</feature>
<feature type="domain" description="Topo IA-type catalytic" evidence="2">
    <location>
        <begin position="129"/>
        <end position="557"/>
    </location>
</feature>
<feature type="zinc finger region" description="C4-type 1">
    <location>
        <begin position="577"/>
        <end position="603"/>
    </location>
</feature>
<feature type="zinc finger region" description="C4-type 2">
    <location>
        <begin position="617"/>
        <end position="645"/>
    </location>
</feature>
<feature type="zinc finger region" description="C4-type 3">
    <location>
        <begin position="658"/>
        <end position="681"/>
    </location>
</feature>
<feature type="region of interest" description="Interaction with DNA" evidence="1">
    <location>
        <begin position="163"/>
        <end position="168"/>
    </location>
</feature>
<feature type="region of interest" description="Disordered" evidence="3">
    <location>
        <begin position="328"/>
        <end position="356"/>
    </location>
</feature>
<feature type="active site" description="O-(5'-phospho-DNA)-tyrosine intermediate" evidence="2">
    <location>
        <position position="298"/>
    </location>
</feature>
<feature type="binding site" evidence="1">
    <location>
        <position position="9"/>
    </location>
    <ligand>
        <name>Mg(2+)</name>
        <dbReference type="ChEBI" id="CHEBI:18420"/>
        <note>catalytic</note>
    </ligand>
</feature>
<feature type="binding site" evidence="1">
    <location>
        <position position="82"/>
    </location>
    <ligand>
        <name>Mg(2+)</name>
        <dbReference type="ChEBI" id="CHEBI:18420"/>
        <note>catalytic</note>
    </ligand>
</feature>
<feature type="site" description="Interaction with DNA" evidence="1">
    <location>
        <position position="33"/>
    </location>
</feature>
<feature type="site" description="Interaction with DNA" evidence="1">
    <location>
        <position position="139"/>
    </location>
</feature>
<feature type="site" description="Interaction with DNA" evidence="1">
    <location>
        <position position="140"/>
    </location>
</feature>
<feature type="site" description="Interaction with DNA" evidence="1">
    <location>
        <position position="143"/>
    </location>
</feature>
<feature type="site" description="Interaction with DNA" evidence="1">
    <location>
        <position position="148"/>
    </location>
</feature>
<feature type="site" description="Interaction with DNA" evidence="1">
    <location>
        <position position="155"/>
    </location>
</feature>
<feature type="site" description="Interaction with DNA" evidence="1">
    <location>
        <position position="300"/>
    </location>
</feature>
<feature type="site" description="Interaction with DNA" evidence="1">
    <location>
        <position position="488"/>
    </location>
</feature>
<gene>
    <name evidence="1" type="primary">topA</name>
    <name type="ordered locus">SACOL1267</name>
</gene>
<evidence type="ECO:0000255" key="1">
    <source>
        <dbReference type="HAMAP-Rule" id="MF_00952"/>
    </source>
</evidence>
<evidence type="ECO:0000255" key="2">
    <source>
        <dbReference type="PROSITE-ProRule" id="PRU01383"/>
    </source>
</evidence>
<evidence type="ECO:0000256" key="3">
    <source>
        <dbReference type="SAM" id="MobiDB-lite"/>
    </source>
</evidence>
<comment type="function">
    <text evidence="1">Releases the supercoiling and torsional tension of DNA, which is introduced during the DNA replication and transcription, by transiently cleaving and rejoining one strand of the DNA duplex. Introduces a single-strand break via transesterification at a target site in duplex DNA. The scissile phosphodiester is attacked by the catalytic tyrosine of the enzyme, resulting in the formation of a DNA-(5'-phosphotyrosyl)-enzyme intermediate and the expulsion of a 3'-OH DNA strand. The free DNA strand then undergoes passage around the unbroken strand, thus removing DNA supercoils. Finally, in the religation step, the DNA 3'-OH attacks the covalent intermediate to expel the active-site tyrosine and restore the DNA phosphodiester backbone.</text>
</comment>
<comment type="catalytic activity">
    <reaction evidence="1">
        <text>ATP-independent breakage of single-stranded DNA, followed by passage and rejoining.</text>
        <dbReference type="EC" id="5.6.2.1"/>
    </reaction>
</comment>
<comment type="cofactor">
    <cofactor evidence="1">
        <name>Mg(2+)</name>
        <dbReference type="ChEBI" id="CHEBI:18420"/>
    </cofactor>
</comment>
<comment type="subunit">
    <text evidence="1">Monomer.</text>
</comment>
<comment type="similarity">
    <text evidence="1">Belongs to the type IA topoisomerase family.</text>
</comment>
<organism>
    <name type="scientific">Staphylococcus aureus (strain COL)</name>
    <dbReference type="NCBI Taxonomy" id="93062"/>
    <lineage>
        <taxon>Bacteria</taxon>
        <taxon>Bacillati</taxon>
        <taxon>Bacillota</taxon>
        <taxon>Bacilli</taxon>
        <taxon>Bacillales</taxon>
        <taxon>Staphylococcaceae</taxon>
        <taxon>Staphylococcus</taxon>
    </lineage>
</organism>
<keyword id="KW-0238">DNA-binding</keyword>
<keyword id="KW-0413">Isomerase</keyword>
<keyword id="KW-0460">Magnesium</keyword>
<keyword id="KW-0479">Metal-binding</keyword>
<keyword id="KW-0677">Repeat</keyword>
<keyword id="KW-0799">Topoisomerase</keyword>
<keyword id="KW-0862">Zinc</keyword>
<keyword id="KW-0863">Zinc-finger</keyword>
<accession>Q5HGI2</accession>
<reference key="1">
    <citation type="journal article" date="2005" name="J. Bacteriol.">
        <title>Insights on evolution of virulence and resistance from the complete genome analysis of an early methicillin-resistant Staphylococcus aureus strain and a biofilm-producing methicillin-resistant Staphylococcus epidermidis strain.</title>
        <authorList>
            <person name="Gill S.R."/>
            <person name="Fouts D.E."/>
            <person name="Archer G.L."/>
            <person name="Mongodin E.F."/>
            <person name="DeBoy R.T."/>
            <person name="Ravel J."/>
            <person name="Paulsen I.T."/>
            <person name="Kolonay J.F."/>
            <person name="Brinkac L.M."/>
            <person name="Beanan M.J."/>
            <person name="Dodson R.J."/>
            <person name="Daugherty S.C."/>
            <person name="Madupu R."/>
            <person name="Angiuoli S.V."/>
            <person name="Durkin A.S."/>
            <person name="Haft D.H."/>
            <person name="Vamathevan J.J."/>
            <person name="Khouri H."/>
            <person name="Utterback T.R."/>
            <person name="Lee C."/>
            <person name="Dimitrov G."/>
            <person name="Jiang L."/>
            <person name="Qin H."/>
            <person name="Weidman J."/>
            <person name="Tran K."/>
            <person name="Kang K.H."/>
            <person name="Hance I.R."/>
            <person name="Nelson K.E."/>
            <person name="Fraser C.M."/>
        </authorList>
    </citation>
    <scope>NUCLEOTIDE SEQUENCE [LARGE SCALE GENOMIC DNA]</scope>
    <source>
        <strain>COL</strain>
    </source>
</reference>
<name>TOP1_STAAC</name>